<keyword id="KW-0687">Ribonucleoprotein</keyword>
<keyword id="KW-0689">Ribosomal protein</keyword>
<name>RL28_ACISJ</name>
<comment type="similarity">
    <text evidence="1">Belongs to the bacterial ribosomal protein bL28 family.</text>
</comment>
<feature type="chain" id="PRO_1000007157" description="Large ribosomal subunit protein bL28">
    <location>
        <begin position="1"/>
        <end position="77"/>
    </location>
</feature>
<gene>
    <name evidence="1" type="primary">rpmB</name>
    <name type="ordered locus">Ajs_3384</name>
</gene>
<organism>
    <name type="scientific">Acidovorax sp. (strain JS42)</name>
    <dbReference type="NCBI Taxonomy" id="232721"/>
    <lineage>
        <taxon>Bacteria</taxon>
        <taxon>Pseudomonadati</taxon>
        <taxon>Pseudomonadota</taxon>
        <taxon>Betaproteobacteria</taxon>
        <taxon>Burkholderiales</taxon>
        <taxon>Comamonadaceae</taxon>
        <taxon>Acidovorax</taxon>
    </lineage>
</organism>
<protein>
    <recommendedName>
        <fullName evidence="1">Large ribosomal subunit protein bL28</fullName>
    </recommendedName>
    <alternativeName>
        <fullName evidence="2">50S ribosomal protein L28</fullName>
    </alternativeName>
</protein>
<proteinExistence type="inferred from homology"/>
<accession>A1WB79</accession>
<evidence type="ECO:0000255" key="1">
    <source>
        <dbReference type="HAMAP-Rule" id="MF_00373"/>
    </source>
</evidence>
<evidence type="ECO:0000305" key="2"/>
<dbReference type="EMBL" id="CP000539">
    <property type="protein sequence ID" value="ABM43504.1"/>
    <property type="molecule type" value="Genomic_DNA"/>
</dbReference>
<dbReference type="SMR" id="A1WB79"/>
<dbReference type="STRING" id="232721.Ajs_3384"/>
<dbReference type="KEGG" id="ajs:Ajs_3384"/>
<dbReference type="eggNOG" id="COG0227">
    <property type="taxonomic scope" value="Bacteria"/>
</dbReference>
<dbReference type="HOGENOM" id="CLU_064548_3_1_4"/>
<dbReference type="Proteomes" id="UP000000645">
    <property type="component" value="Chromosome"/>
</dbReference>
<dbReference type="GO" id="GO:0022625">
    <property type="term" value="C:cytosolic large ribosomal subunit"/>
    <property type="evidence" value="ECO:0007669"/>
    <property type="project" value="TreeGrafter"/>
</dbReference>
<dbReference type="GO" id="GO:0003735">
    <property type="term" value="F:structural constituent of ribosome"/>
    <property type="evidence" value="ECO:0007669"/>
    <property type="project" value="InterPro"/>
</dbReference>
<dbReference type="GO" id="GO:0006412">
    <property type="term" value="P:translation"/>
    <property type="evidence" value="ECO:0007669"/>
    <property type="project" value="UniProtKB-UniRule"/>
</dbReference>
<dbReference type="FunFam" id="2.30.170.40:FF:000001">
    <property type="entry name" value="50S ribosomal protein L28"/>
    <property type="match status" value="1"/>
</dbReference>
<dbReference type="Gene3D" id="2.30.170.40">
    <property type="entry name" value="Ribosomal protein L28/L24"/>
    <property type="match status" value="1"/>
</dbReference>
<dbReference type="HAMAP" id="MF_00373">
    <property type="entry name" value="Ribosomal_bL28"/>
    <property type="match status" value="1"/>
</dbReference>
<dbReference type="InterPro" id="IPR026569">
    <property type="entry name" value="Ribosomal_bL28"/>
</dbReference>
<dbReference type="InterPro" id="IPR034704">
    <property type="entry name" value="Ribosomal_bL28/bL31-like_sf"/>
</dbReference>
<dbReference type="InterPro" id="IPR001383">
    <property type="entry name" value="Ribosomal_bL28_bact-type"/>
</dbReference>
<dbReference type="InterPro" id="IPR037147">
    <property type="entry name" value="Ribosomal_bL28_sf"/>
</dbReference>
<dbReference type="NCBIfam" id="TIGR00009">
    <property type="entry name" value="L28"/>
    <property type="match status" value="1"/>
</dbReference>
<dbReference type="PANTHER" id="PTHR13528">
    <property type="entry name" value="39S RIBOSOMAL PROTEIN L28, MITOCHONDRIAL"/>
    <property type="match status" value="1"/>
</dbReference>
<dbReference type="PANTHER" id="PTHR13528:SF2">
    <property type="entry name" value="LARGE RIBOSOMAL SUBUNIT PROTEIN BL28M"/>
    <property type="match status" value="1"/>
</dbReference>
<dbReference type="Pfam" id="PF00830">
    <property type="entry name" value="Ribosomal_L28"/>
    <property type="match status" value="1"/>
</dbReference>
<dbReference type="SUPFAM" id="SSF143800">
    <property type="entry name" value="L28p-like"/>
    <property type="match status" value="1"/>
</dbReference>
<reference key="1">
    <citation type="submission" date="2006-12" db="EMBL/GenBank/DDBJ databases">
        <title>Complete sequence of chromosome 1 of Acidovorax sp. JS42.</title>
        <authorList>
            <person name="Copeland A."/>
            <person name="Lucas S."/>
            <person name="Lapidus A."/>
            <person name="Barry K."/>
            <person name="Detter J.C."/>
            <person name="Glavina del Rio T."/>
            <person name="Dalin E."/>
            <person name="Tice H."/>
            <person name="Pitluck S."/>
            <person name="Chertkov O."/>
            <person name="Brettin T."/>
            <person name="Bruce D."/>
            <person name="Han C."/>
            <person name="Tapia R."/>
            <person name="Gilna P."/>
            <person name="Schmutz J."/>
            <person name="Larimer F."/>
            <person name="Land M."/>
            <person name="Hauser L."/>
            <person name="Kyrpides N."/>
            <person name="Kim E."/>
            <person name="Stahl D."/>
            <person name="Richardson P."/>
        </authorList>
    </citation>
    <scope>NUCLEOTIDE SEQUENCE [LARGE SCALE GENOMIC DNA]</scope>
    <source>
        <strain>JS42</strain>
    </source>
</reference>
<sequence>MARVCEVTGKKPMVGNNVSHANNKTKRRFLPNLQYRRFWVESENRWVRLRVSSAALRLIDKNGIDSVLADMRARGQA</sequence>